<name>YL169_YEAST</name>
<evidence type="ECO:0000255" key="1"/>
<evidence type="ECO:0000305" key="2"/>
<evidence type="ECO:0000305" key="3">
    <source>
    </source>
</evidence>
<proteinExistence type="uncertain"/>
<reference key="1">
    <citation type="journal article" date="1997" name="Nature">
        <title>The nucleotide sequence of Saccharomyces cerevisiae chromosome XII.</title>
        <authorList>
            <person name="Johnston M."/>
            <person name="Hillier L.W."/>
            <person name="Riles L."/>
            <person name="Albermann K."/>
            <person name="Andre B."/>
            <person name="Ansorge W."/>
            <person name="Benes V."/>
            <person name="Brueckner M."/>
            <person name="Delius H."/>
            <person name="Dubois E."/>
            <person name="Duesterhoeft A."/>
            <person name="Entian K.-D."/>
            <person name="Floeth M."/>
            <person name="Goffeau A."/>
            <person name="Hebling U."/>
            <person name="Heumann K."/>
            <person name="Heuss-Neitzel D."/>
            <person name="Hilbert H."/>
            <person name="Hilger F."/>
            <person name="Kleine K."/>
            <person name="Koetter P."/>
            <person name="Louis E.J."/>
            <person name="Messenguy F."/>
            <person name="Mewes H.-W."/>
            <person name="Miosga T."/>
            <person name="Moestl D."/>
            <person name="Mueller-Auer S."/>
            <person name="Nentwich U."/>
            <person name="Obermaier B."/>
            <person name="Piravandi E."/>
            <person name="Pohl T.M."/>
            <person name="Portetelle D."/>
            <person name="Purnelle B."/>
            <person name="Rechmann S."/>
            <person name="Rieger M."/>
            <person name="Rinke M."/>
            <person name="Rose M."/>
            <person name="Scharfe M."/>
            <person name="Scherens B."/>
            <person name="Scholler P."/>
            <person name="Schwager C."/>
            <person name="Schwarz S."/>
            <person name="Underwood A.P."/>
            <person name="Urrestarazu L.A."/>
            <person name="Vandenbol M."/>
            <person name="Verhasselt P."/>
            <person name="Vierendeels F."/>
            <person name="Voet M."/>
            <person name="Volckaert G."/>
            <person name="Voss H."/>
            <person name="Wambutt R."/>
            <person name="Wedler E."/>
            <person name="Wedler H."/>
            <person name="Zimmermann F.K."/>
            <person name="Zollner A."/>
            <person name="Hani J."/>
            <person name="Hoheisel J.D."/>
        </authorList>
    </citation>
    <scope>NUCLEOTIDE SEQUENCE [LARGE SCALE GENOMIC DNA]</scope>
    <source>
        <strain>ATCC 204508 / S288c</strain>
    </source>
</reference>
<reference key="2">
    <citation type="journal article" date="2014" name="G3 (Bethesda)">
        <title>The reference genome sequence of Saccharomyces cerevisiae: Then and now.</title>
        <authorList>
            <person name="Engel S.R."/>
            <person name="Dietrich F.S."/>
            <person name="Fisk D.G."/>
            <person name="Binkley G."/>
            <person name="Balakrishnan R."/>
            <person name="Costanzo M.C."/>
            <person name="Dwight S.S."/>
            <person name="Hitz B.C."/>
            <person name="Karra K."/>
            <person name="Nash R.S."/>
            <person name="Weng S."/>
            <person name="Wong E.D."/>
            <person name="Lloyd P."/>
            <person name="Skrzypek M.S."/>
            <person name="Miyasato S.R."/>
            <person name="Simison M."/>
            <person name="Cherry J.M."/>
        </authorList>
    </citation>
    <scope>GENOME REANNOTATION</scope>
    <source>
        <strain>ATCC 204508 / S288c</strain>
    </source>
</reference>
<protein>
    <recommendedName>
        <fullName>Putative uncharacterized protein YLR169W</fullName>
    </recommendedName>
</protein>
<sequence length="117" mass="13710">MLKFKNMYITSHDNFIAYIFFTFFTFIPFYRSDQSTLCRCSQKIFLSGQRLLRQTVIIVGPLAPFSSYSSPFFFIPLFFSGPNSIPFQDYRCSPWCPSRSHGAVLPSYCSLRWSHRT</sequence>
<organism>
    <name type="scientific">Saccharomyces cerevisiae (strain ATCC 204508 / S288c)</name>
    <name type="common">Baker's yeast</name>
    <dbReference type="NCBI Taxonomy" id="559292"/>
    <lineage>
        <taxon>Eukaryota</taxon>
        <taxon>Fungi</taxon>
        <taxon>Dikarya</taxon>
        <taxon>Ascomycota</taxon>
        <taxon>Saccharomycotina</taxon>
        <taxon>Saccharomycetes</taxon>
        <taxon>Saccharomycetales</taxon>
        <taxon>Saccharomycetaceae</taxon>
        <taxon>Saccharomyces</taxon>
    </lineage>
</organism>
<dbReference type="EMBL" id="U17246">
    <property type="protein sequence ID" value="AAB67477.1"/>
    <property type="molecule type" value="Genomic_DNA"/>
</dbReference>
<dbReference type="PIR" id="S69291">
    <property type="entry name" value="S69291"/>
</dbReference>
<dbReference type="IntAct" id="O13561">
    <property type="interactions" value="2"/>
</dbReference>
<dbReference type="PaxDb" id="4932-YLR169W"/>
<dbReference type="EnsemblFungi" id="YLR169W_mRNA">
    <property type="protein sequence ID" value="YLR169W"/>
    <property type="gene ID" value="YLR169W"/>
</dbReference>
<dbReference type="AGR" id="SGD:S000004159"/>
<dbReference type="SGD" id="S000004159">
    <property type="gene designation" value="YLR169W"/>
</dbReference>
<dbReference type="HOGENOM" id="CLU_2086671_0_0_1"/>
<dbReference type="GO" id="GO:0016020">
    <property type="term" value="C:membrane"/>
    <property type="evidence" value="ECO:0007669"/>
    <property type="project" value="UniProtKB-SubCell"/>
</dbReference>
<keyword id="KW-0472">Membrane</keyword>
<keyword id="KW-0812">Transmembrane</keyword>
<keyword id="KW-1133">Transmembrane helix</keyword>
<feature type="chain" id="PRO_0000299618" description="Putative uncharacterized protein YLR169W">
    <location>
        <begin position="1"/>
        <end position="117"/>
    </location>
</feature>
<feature type="transmembrane region" description="Helical" evidence="1">
    <location>
        <begin position="9"/>
        <end position="29"/>
    </location>
</feature>
<feature type="transmembrane region" description="Helical" evidence="1">
    <location>
        <begin position="56"/>
        <end position="76"/>
    </location>
</feature>
<comment type="subcellular location">
    <subcellularLocation>
        <location evidence="2">Membrane</location>
        <topology evidence="2">Multi-pass membrane protein</topology>
    </subcellularLocation>
</comment>
<comment type="miscellaneous">
    <text evidence="2">Partially overlaps APS1.</text>
</comment>
<comment type="caution">
    <text evidence="3">Product of a dubious gene prediction unlikely to encode a functional protein. Because of that it is not part of the S.cerevisiae S288c complete/reference proteome set.</text>
</comment>
<gene>
    <name type="ordered locus">YLR169W</name>
</gene>
<accession>O13561</accession>